<keyword id="KW-0966">Cell projection</keyword>
<keyword id="KW-0969">Cilium</keyword>
<keyword id="KW-0970">Cilium biogenesis/degradation</keyword>
<keyword id="KW-1185">Reference proteome</keyword>
<comment type="function">
    <text evidence="1 5">Required for ciliogenesis (PubMed:26389662). Acts as a tethering factor that facilitates recruitment of vcp/p97 to the intraflagellar transport complex B (IFT-B) in cilia (By similarity).</text>
</comment>
<comment type="subcellular location">
    <subcellularLocation>
        <location evidence="1">Cell projection</location>
        <location evidence="1">Cilium</location>
    </subcellularLocation>
</comment>
<comment type="disruption phenotype">
    <text evidence="4">Defects in left-right asymmetry during embryogenesis, due to defects in ciliogenesis.</text>
</comment>
<comment type="similarity">
    <text evidence="7">Belongs to the UBXN10 family.</text>
</comment>
<feature type="chain" id="PRO_0000440624" description="UBX domain-containing protein 10">
    <location>
        <begin position="1"/>
        <end position="214"/>
    </location>
</feature>
<feature type="domain" description="UBX" evidence="2">
    <location>
        <begin position="127"/>
        <end position="204"/>
    </location>
</feature>
<feature type="region of interest" description="Disordered" evidence="3">
    <location>
        <begin position="1"/>
        <end position="79"/>
    </location>
</feature>
<feature type="compositionally biased region" description="Basic residues" evidence="3">
    <location>
        <begin position="1"/>
        <end position="13"/>
    </location>
</feature>
<feature type="compositionally biased region" description="Polar residues" evidence="3">
    <location>
        <begin position="16"/>
        <end position="25"/>
    </location>
</feature>
<feature type="compositionally biased region" description="Low complexity" evidence="3">
    <location>
        <begin position="49"/>
        <end position="60"/>
    </location>
</feature>
<sequence length="214" mass="23939">MHVTRPKSSKGRSRPMITNSSMIYTPSQPSALSPQPPAAAKTKDKSNQSLRSRAILRRSSQPTTDILTEAYDRPPEEPVSLNRYRVLPSIEKKTSTDNQKCSQCVSRHRKCQHTNARLDVVSDSTPPEESDLLLAIRTPCGQRFKRSFRPSDQLKGVLSAAEAEFGDRFDNCIIETMDVPRRTFSNLTMTLAQCGVLNKSVLCISHDDSEMDLT</sequence>
<name>UBX10_DANRE</name>
<accession>Q0P3Z8</accession>
<protein>
    <recommendedName>
        <fullName evidence="7">UBX domain-containing protein 10</fullName>
    </recommendedName>
</protein>
<evidence type="ECO:0000250" key="1">
    <source>
        <dbReference type="UniProtKB" id="Q96LJ8"/>
    </source>
</evidence>
<evidence type="ECO:0000255" key="2">
    <source>
        <dbReference type="PROSITE-ProRule" id="PRU00215"/>
    </source>
</evidence>
<evidence type="ECO:0000256" key="3">
    <source>
        <dbReference type="SAM" id="MobiDB-lite"/>
    </source>
</evidence>
<evidence type="ECO:0000269" key="4">
    <source>
    </source>
</evidence>
<evidence type="ECO:0000269" key="5">
    <source>
    </source>
</evidence>
<evidence type="ECO:0000303" key="6">
    <source ref="2"/>
</evidence>
<evidence type="ECO:0000305" key="7"/>
<evidence type="ECO:0000312" key="8">
    <source>
        <dbReference type="ZFIN" id="ZDB-GENE-060825-319"/>
    </source>
</evidence>
<reference key="1">
    <citation type="journal article" date="2013" name="Nature">
        <title>The zebrafish reference genome sequence and its relationship to the human genome.</title>
        <authorList>
            <person name="Howe K."/>
            <person name="Clark M.D."/>
            <person name="Torroja C.F."/>
            <person name="Torrance J."/>
            <person name="Berthelot C."/>
            <person name="Muffato M."/>
            <person name="Collins J.E."/>
            <person name="Humphray S."/>
            <person name="McLaren K."/>
            <person name="Matthews L."/>
            <person name="McLaren S."/>
            <person name="Sealy I."/>
            <person name="Caccamo M."/>
            <person name="Churcher C."/>
            <person name="Scott C."/>
            <person name="Barrett J.C."/>
            <person name="Koch R."/>
            <person name="Rauch G.J."/>
            <person name="White S."/>
            <person name="Chow W."/>
            <person name="Kilian B."/>
            <person name="Quintais L.T."/>
            <person name="Guerra-Assuncao J.A."/>
            <person name="Zhou Y."/>
            <person name="Gu Y."/>
            <person name="Yen J."/>
            <person name="Vogel J.H."/>
            <person name="Eyre T."/>
            <person name="Redmond S."/>
            <person name="Banerjee R."/>
            <person name="Chi J."/>
            <person name="Fu B."/>
            <person name="Langley E."/>
            <person name="Maguire S.F."/>
            <person name="Laird G.K."/>
            <person name="Lloyd D."/>
            <person name="Kenyon E."/>
            <person name="Donaldson S."/>
            <person name="Sehra H."/>
            <person name="Almeida-King J."/>
            <person name="Loveland J."/>
            <person name="Trevanion S."/>
            <person name="Jones M."/>
            <person name="Quail M."/>
            <person name="Willey D."/>
            <person name="Hunt A."/>
            <person name="Burton J."/>
            <person name="Sims S."/>
            <person name="McLay K."/>
            <person name="Plumb B."/>
            <person name="Davis J."/>
            <person name="Clee C."/>
            <person name="Oliver K."/>
            <person name="Clark R."/>
            <person name="Riddle C."/>
            <person name="Elliot D."/>
            <person name="Threadgold G."/>
            <person name="Harden G."/>
            <person name="Ware D."/>
            <person name="Begum S."/>
            <person name="Mortimore B."/>
            <person name="Kerry G."/>
            <person name="Heath P."/>
            <person name="Phillimore B."/>
            <person name="Tracey A."/>
            <person name="Corby N."/>
            <person name="Dunn M."/>
            <person name="Johnson C."/>
            <person name="Wood J."/>
            <person name="Clark S."/>
            <person name="Pelan S."/>
            <person name="Griffiths G."/>
            <person name="Smith M."/>
            <person name="Glithero R."/>
            <person name="Howden P."/>
            <person name="Barker N."/>
            <person name="Lloyd C."/>
            <person name="Stevens C."/>
            <person name="Harley J."/>
            <person name="Holt K."/>
            <person name="Panagiotidis G."/>
            <person name="Lovell J."/>
            <person name="Beasley H."/>
            <person name="Henderson C."/>
            <person name="Gordon D."/>
            <person name="Auger K."/>
            <person name="Wright D."/>
            <person name="Collins J."/>
            <person name="Raisen C."/>
            <person name="Dyer L."/>
            <person name="Leung K."/>
            <person name="Robertson L."/>
            <person name="Ambridge K."/>
            <person name="Leongamornlert D."/>
            <person name="McGuire S."/>
            <person name="Gilderthorp R."/>
            <person name="Griffiths C."/>
            <person name="Manthravadi D."/>
            <person name="Nichol S."/>
            <person name="Barker G."/>
            <person name="Whitehead S."/>
            <person name="Kay M."/>
            <person name="Brown J."/>
            <person name="Murnane C."/>
            <person name="Gray E."/>
            <person name="Humphries M."/>
            <person name="Sycamore N."/>
            <person name="Barker D."/>
            <person name="Saunders D."/>
            <person name="Wallis J."/>
            <person name="Babbage A."/>
            <person name="Hammond S."/>
            <person name="Mashreghi-Mohammadi M."/>
            <person name="Barr L."/>
            <person name="Martin S."/>
            <person name="Wray P."/>
            <person name="Ellington A."/>
            <person name="Matthews N."/>
            <person name="Ellwood M."/>
            <person name="Woodmansey R."/>
            <person name="Clark G."/>
            <person name="Cooper J."/>
            <person name="Tromans A."/>
            <person name="Grafham D."/>
            <person name="Skuce C."/>
            <person name="Pandian R."/>
            <person name="Andrews R."/>
            <person name="Harrison E."/>
            <person name="Kimberley A."/>
            <person name="Garnett J."/>
            <person name="Fosker N."/>
            <person name="Hall R."/>
            <person name="Garner P."/>
            <person name="Kelly D."/>
            <person name="Bird C."/>
            <person name="Palmer S."/>
            <person name="Gehring I."/>
            <person name="Berger A."/>
            <person name="Dooley C.M."/>
            <person name="Ersan-Urun Z."/>
            <person name="Eser C."/>
            <person name="Geiger H."/>
            <person name="Geisler M."/>
            <person name="Karotki L."/>
            <person name="Kirn A."/>
            <person name="Konantz J."/>
            <person name="Konantz M."/>
            <person name="Oberlander M."/>
            <person name="Rudolph-Geiger S."/>
            <person name="Teucke M."/>
            <person name="Lanz C."/>
            <person name="Raddatz G."/>
            <person name="Osoegawa K."/>
            <person name="Zhu B."/>
            <person name="Rapp A."/>
            <person name="Widaa S."/>
            <person name="Langford C."/>
            <person name="Yang F."/>
            <person name="Schuster S.C."/>
            <person name="Carter N.P."/>
            <person name="Harrow J."/>
            <person name="Ning Z."/>
            <person name="Herrero J."/>
            <person name="Searle S.M."/>
            <person name="Enright A."/>
            <person name="Geisler R."/>
            <person name="Plasterk R.H."/>
            <person name="Lee C."/>
            <person name="Westerfield M."/>
            <person name="de Jong P.J."/>
            <person name="Zon L.I."/>
            <person name="Postlethwait J.H."/>
            <person name="Nusslein-Volhard C."/>
            <person name="Hubbard T.J."/>
            <person name="Roest Crollius H."/>
            <person name="Rogers J."/>
            <person name="Stemple D.L."/>
        </authorList>
    </citation>
    <scope>NUCLEOTIDE SEQUENCE [LARGE SCALE GENOMIC DNA]</scope>
    <source>
        <strain>Tuebingen</strain>
    </source>
</reference>
<reference key="2">
    <citation type="submission" date="2006-08" db="EMBL/GenBank/DDBJ databases">
        <authorList>
            <consortium name="NIH - Zebrafish Gene Collection (ZGC) project"/>
        </authorList>
    </citation>
    <scope>NUCLEOTIDE SEQUENCE [LARGE SCALE MRNA]</scope>
    <source>
        <tissue>Intestine</tissue>
    </source>
</reference>
<reference key="3">
    <citation type="journal article" date="2015" name="Nat. Cell Biol.">
        <title>Systematic proteomics of the VCP-UBXD adaptor network identifies a role for UBXN10 in regulating ciliogenesis.</title>
        <authorList>
            <person name="Raman M."/>
            <person name="Sergeev M."/>
            <person name="Garnaas M."/>
            <person name="Lydeard J.R."/>
            <person name="Huttlin E.L."/>
            <person name="Goessling W."/>
            <person name="Shah J.V."/>
            <person name="Harper J.W."/>
        </authorList>
    </citation>
    <scope>FUNCTION</scope>
    <scope>DISRUPTION PHENOTYPE</scope>
</reference>
<proteinExistence type="evidence at transcript level"/>
<gene>
    <name evidence="8" type="primary">ubxn10</name>
    <name evidence="6" type="ORF">zgc:153648</name>
</gene>
<organism>
    <name type="scientific">Danio rerio</name>
    <name type="common">Zebrafish</name>
    <name type="synonym">Brachydanio rerio</name>
    <dbReference type="NCBI Taxonomy" id="7955"/>
    <lineage>
        <taxon>Eukaryota</taxon>
        <taxon>Metazoa</taxon>
        <taxon>Chordata</taxon>
        <taxon>Craniata</taxon>
        <taxon>Vertebrata</taxon>
        <taxon>Euteleostomi</taxon>
        <taxon>Actinopterygii</taxon>
        <taxon>Neopterygii</taxon>
        <taxon>Teleostei</taxon>
        <taxon>Ostariophysi</taxon>
        <taxon>Cypriniformes</taxon>
        <taxon>Danionidae</taxon>
        <taxon>Danioninae</taxon>
        <taxon>Danio</taxon>
    </lineage>
</organism>
<dbReference type="EMBL" id="CR846089">
    <property type="status" value="NOT_ANNOTATED_CDS"/>
    <property type="molecule type" value="Genomic_DNA"/>
</dbReference>
<dbReference type="EMBL" id="BC122361">
    <property type="protein sequence ID" value="AAI22362.1"/>
    <property type="molecule type" value="mRNA"/>
</dbReference>
<dbReference type="RefSeq" id="NP_001038911.1">
    <property type="nucleotide sequence ID" value="NM_001045446.2"/>
</dbReference>
<dbReference type="RefSeq" id="XP_017209098.1">
    <property type="nucleotide sequence ID" value="XM_017353609.1"/>
</dbReference>
<dbReference type="SMR" id="Q0P3Z8"/>
<dbReference type="FunCoup" id="Q0P3Z8">
    <property type="interactions" value="1054"/>
</dbReference>
<dbReference type="STRING" id="7955.ENSDARP00000068895"/>
<dbReference type="PaxDb" id="7955-ENSDARP00000068895"/>
<dbReference type="Ensembl" id="ENSDART00000074406">
    <property type="protein sequence ID" value="ENSDARP00000068895"/>
    <property type="gene ID" value="ENSDARG00000052535"/>
</dbReference>
<dbReference type="GeneID" id="751736"/>
<dbReference type="KEGG" id="dre:751736"/>
<dbReference type="AGR" id="ZFIN:ZDB-GENE-060825-319"/>
<dbReference type="CTD" id="127733"/>
<dbReference type="ZFIN" id="ZDB-GENE-060825-319">
    <property type="gene designation" value="ubxn10"/>
</dbReference>
<dbReference type="eggNOG" id="ENOG502S4IN">
    <property type="taxonomic scope" value="Eukaryota"/>
</dbReference>
<dbReference type="HOGENOM" id="CLU_079919_0_0_1"/>
<dbReference type="InParanoid" id="Q0P3Z8"/>
<dbReference type="OMA" id="ADSFIWQ"/>
<dbReference type="OrthoDB" id="436606at2759"/>
<dbReference type="PhylomeDB" id="Q0P3Z8"/>
<dbReference type="TreeFam" id="TF335927"/>
<dbReference type="PRO" id="PR:Q0P3Z8"/>
<dbReference type="Proteomes" id="UP000000437">
    <property type="component" value="Chromosome 23"/>
</dbReference>
<dbReference type="Bgee" id="ENSDARG00000052535">
    <property type="expression patterns" value="Expressed in testis and 7 other cell types or tissues"/>
</dbReference>
<dbReference type="GO" id="GO:0005929">
    <property type="term" value="C:cilium"/>
    <property type="evidence" value="ECO:0000250"/>
    <property type="project" value="UniProtKB"/>
</dbReference>
<dbReference type="GO" id="GO:0005783">
    <property type="term" value="C:endoplasmic reticulum"/>
    <property type="evidence" value="ECO:0000318"/>
    <property type="project" value="GO_Central"/>
</dbReference>
<dbReference type="GO" id="GO:0043130">
    <property type="term" value="F:ubiquitin binding"/>
    <property type="evidence" value="ECO:0000318"/>
    <property type="project" value="GO_Central"/>
</dbReference>
<dbReference type="GO" id="GO:0060271">
    <property type="term" value="P:cilium assembly"/>
    <property type="evidence" value="ECO:0000250"/>
    <property type="project" value="UniProtKB"/>
</dbReference>
<dbReference type="GO" id="GO:0061371">
    <property type="term" value="P:determination of heart left/right asymmetry"/>
    <property type="evidence" value="ECO:0000315"/>
    <property type="project" value="ZFIN"/>
</dbReference>
<dbReference type="GO" id="GO:0036503">
    <property type="term" value="P:ERAD pathway"/>
    <property type="evidence" value="ECO:0000318"/>
    <property type="project" value="GO_Central"/>
</dbReference>
<dbReference type="CDD" id="cd17076">
    <property type="entry name" value="UBX_UBXN10"/>
    <property type="match status" value="1"/>
</dbReference>
<dbReference type="Gene3D" id="3.10.20.90">
    <property type="entry name" value="Phosphatidylinositol 3-kinase Catalytic Subunit, Chain A, domain 1"/>
    <property type="match status" value="1"/>
</dbReference>
<dbReference type="InterPro" id="IPR029071">
    <property type="entry name" value="Ubiquitin-like_domsf"/>
</dbReference>
<dbReference type="InterPro" id="IPR001012">
    <property type="entry name" value="UBX_dom"/>
</dbReference>
<dbReference type="Pfam" id="PF00789">
    <property type="entry name" value="UBX"/>
    <property type="match status" value="1"/>
</dbReference>
<dbReference type="SUPFAM" id="SSF54236">
    <property type="entry name" value="Ubiquitin-like"/>
    <property type="match status" value="1"/>
</dbReference>
<dbReference type="PROSITE" id="PS50033">
    <property type="entry name" value="UBX"/>
    <property type="match status" value="1"/>
</dbReference>